<gene>
    <name type="primary">ALG3</name>
    <name type="ordered locus">DEHA2A05940g</name>
</gene>
<feature type="chain" id="PRO_0000350926" description="Dol-P-Man:Man(5)GlcNAc(2)-PP-Dol alpha-1,3-mannosyltransferase">
    <location>
        <begin position="1"/>
        <end position="481"/>
    </location>
</feature>
<feature type="topological domain" description="Lumenal" evidence="2">
    <location>
        <begin position="1"/>
        <end position="41"/>
    </location>
</feature>
<feature type="transmembrane region" description="Helical" evidence="2">
    <location>
        <begin position="42"/>
        <end position="62"/>
    </location>
</feature>
<feature type="topological domain" description="Cytoplasmic" evidence="2">
    <location>
        <begin position="63"/>
        <end position="124"/>
    </location>
</feature>
<feature type="transmembrane region" description="Helical" evidence="2">
    <location>
        <begin position="125"/>
        <end position="145"/>
    </location>
</feature>
<feature type="topological domain" description="Lumenal" evidence="2">
    <location>
        <begin position="146"/>
        <end position="172"/>
    </location>
</feature>
<feature type="transmembrane region" description="Helical" evidence="2">
    <location>
        <begin position="173"/>
        <end position="193"/>
    </location>
</feature>
<feature type="topological domain" description="Cytoplasmic" evidence="2">
    <location>
        <begin position="194"/>
        <end position="197"/>
    </location>
</feature>
<feature type="transmembrane region" description="Helical" evidence="2">
    <location>
        <begin position="198"/>
        <end position="218"/>
    </location>
</feature>
<feature type="topological domain" description="Lumenal" evidence="2">
    <location>
        <begin position="219"/>
        <end position="221"/>
    </location>
</feature>
<feature type="transmembrane region" description="Helical" evidence="2">
    <location>
        <begin position="222"/>
        <end position="242"/>
    </location>
</feature>
<feature type="topological domain" description="Cytoplasmic" evidence="2">
    <location>
        <begin position="243"/>
        <end position="246"/>
    </location>
</feature>
<feature type="transmembrane region" description="Helical" evidence="2">
    <location>
        <begin position="247"/>
        <end position="267"/>
    </location>
</feature>
<feature type="topological domain" description="Lumenal" evidence="2">
    <location>
        <begin position="268"/>
        <end position="308"/>
    </location>
</feature>
<feature type="transmembrane region" description="Helical" evidence="2">
    <location>
        <begin position="309"/>
        <end position="329"/>
    </location>
</feature>
<feature type="topological domain" description="Cytoplasmic" evidence="2">
    <location>
        <begin position="330"/>
        <end position="367"/>
    </location>
</feature>
<feature type="transmembrane region" description="Helical" evidence="2">
    <location>
        <begin position="368"/>
        <end position="388"/>
    </location>
</feature>
<feature type="topological domain" description="Lumenal" evidence="2">
    <location>
        <begin position="389"/>
        <end position="402"/>
    </location>
</feature>
<feature type="transmembrane region" description="Helical" evidence="2">
    <location>
        <begin position="403"/>
        <end position="423"/>
    </location>
</feature>
<feature type="topological domain" description="Cytoplasmic" evidence="2">
    <location>
        <begin position="424"/>
        <end position="433"/>
    </location>
</feature>
<feature type="transmembrane region" description="Helical" evidence="2">
    <location>
        <begin position="434"/>
        <end position="454"/>
    </location>
</feature>
<feature type="topological domain" description="Lumenal" evidence="2">
    <location>
        <begin position="455"/>
        <end position="481"/>
    </location>
</feature>
<sequence length="481" mass="55180">MTEQSIKDGQRPELPPFTLRNVLNDIYNGILALFTDPFCTRIICPVVIVLTSLLSKAIIYKVPYTEIDFRTYIQQIQIINDGELDYSLVQGDTGQIVYPAGFVQIYQVLNWLTDEGTDIHAGQTAFGYLLALTNFLVIIAYTMTPDFQPWPVYCLLLSKRLFSIYVLRLFNDCFTTVCMVSVTILLQQAAYWYKKGGSSISFLLTMVAADLYSIAISIKMNALLYFPGFIIVAYFLCGENLLKFGTVLLVIPIVQVLMGWKFLLPFFNDEEASYIRWNYINQAFNFNRKFLYKWTVNWRFVSEEFFLSDVFSNGLLIANASVLIFFIFTRYISPRITCKPVSRLIKDAMVGPFSSTINKNNLLIDPKCGPKLVMLILGSTNIIGILFARSLHYQFLSWYCWQLPFMLYMTGWSLLVCIPLWVVHEWCWNVFPSTPMSSGLLVSILAIVLFGVWYNTNEWFPKLADNEAATIDESGESKKDK</sequence>
<organism>
    <name type="scientific">Debaryomyces hansenii (strain ATCC 36239 / CBS 767 / BCRC 21394 / JCM 1990 / NBRC 0083 / IGC 2968)</name>
    <name type="common">Yeast</name>
    <name type="synonym">Torulaspora hansenii</name>
    <dbReference type="NCBI Taxonomy" id="284592"/>
    <lineage>
        <taxon>Eukaryota</taxon>
        <taxon>Fungi</taxon>
        <taxon>Dikarya</taxon>
        <taxon>Ascomycota</taxon>
        <taxon>Saccharomycotina</taxon>
        <taxon>Pichiomycetes</taxon>
        <taxon>Debaryomycetaceae</taxon>
        <taxon>Debaryomyces</taxon>
    </lineage>
</organism>
<proteinExistence type="inferred from homology"/>
<comment type="function">
    <text evidence="1">Dol-P-Man:Man(5)GlcNAc(2)-PP-Dol alpha-1,3-mannosyltransferase that operates in the biosynthetic pathway of dolichol-linked oligosaccharides, the glycan precursors employed in protein asparagine (N)-glycosylation. The assembly of dolichol-linked oligosaccharides begins on the cytosolic side of the endoplasmic reticulum membrane and finishes in its lumen. The sequential addition of sugars to dolichol pyrophosphate produces dolichol-linked oligosaccharides containing fourteen sugars, including two GlcNAcs, nine mannoses and three glucoses. Once assembled, the oligosaccharide is transferred from the lipid to nascent proteins by oligosaccharyltransferases. In the lumen of the endoplasmic reticulum, adds the first dolichyl beta-D-mannosyl phosphate derived mannose in an alpha-1,3 linkage to Man(5)GlcNAc(2)-PP-dolichol to produce Man(6)GlcNAc(2)-PP-dolichol.</text>
</comment>
<comment type="catalytic activity">
    <reaction evidence="1">
        <text>an alpha-D-Man-(1-&gt;2)-alpha-D-Man-(1-&gt;2)-alpha-D-Man-(1-&gt;3)-[alpha-D-Man-(1-&gt;6)]-beta-D-Man-(1-&gt;4)-beta-D-GlcNAc-(1-&gt;4)-alpha-D-GlcNAc-diphospho-di-trans,poly-cis-dolichol + a di-trans,poly-cis-dolichyl beta-D-mannosyl phosphate = an alpha-D-Man-(1-&gt;2)-alpha-D-Man-(1-&gt;2)-alpha-D-Man-(1-&gt;3)-[alpha-D-Man-(1-&gt;3)-alpha-D-Man-(1-&gt;6)]-beta-D-Man-(1-&gt;4)-beta-D-GlcNAc-(1-&gt;4)-alpha-D-GlcNAc-diphospho-di-trans,poly-cis-dolichol + a di-trans,poly-cis-dolichyl phosphate + H(+)</text>
        <dbReference type="Rhea" id="RHEA:29527"/>
        <dbReference type="Rhea" id="RHEA-COMP:19498"/>
        <dbReference type="Rhea" id="RHEA-COMP:19501"/>
        <dbReference type="Rhea" id="RHEA-COMP:19516"/>
        <dbReference type="Rhea" id="RHEA-COMP:19517"/>
        <dbReference type="ChEBI" id="CHEBI:15378"/>
        <dbReference type="ChEBI" id="CHEBI:57683"/>
        <dbReference type="ChEBI" id="CHEBI:58211"/>
        <dbReference type="ChEBI" id="CHEBI:132515"/>
        <dbReference type="ChEBI" id="CHEBI:132516"/>
        <dbReference type="EC" id="2.4.1.258"/>
    </reaction>
    <physiologicalReaction direction="left-to-right" evidence="1">
        <dbReference type="Rhea" id="RHEA:29528"/>
    </physiologicalReaction>
</comment>
<comment type="pathway">
    <text evidence="1">Protein modification; protein glycosylation.</text>
</comment>
<comment type="subcellular location">
    <subcellularLocation>
        <location evidence="1">Endoplasmic reticulum membrane</location>
        <topology evidence="2">Multi-pass membrane protein</topology>
    </subcellularLocation>
</comment>
<comment type="similarity">
    <text evidence="3">Belongs to the glycosyltransferase ALG3 family.</text>
</comment>
<evidence type="ECO:0000250" key="1">
    <source>
        <dbReference type="UniProtKB" id="P38179"/>
    </source>
</evidence>
<evidence type="ECO:0000255" key="2"/>
<evidence type="ECO:0000305" key="3"/>
<reference key="1">
    <citation type="journal article" date="2004" name="Nature">
        <title>Genome evolution in yeasts.</title>
        <authorList>
            <person name="Dujon B."/>
            <person name="Sherman D."/>
            <person name="Fischer G."/>
            <person name="Durrens P."/>
            <person name="Casaregola S."/>
            <person name="Lafontaine I."/>
            <person name="de Montigny J."/>
            <person name="Marck C."/>
            <person name="Neuveglise C."/>
            <person name="Talla E."/>
            <person name="Goffard N."/>
            <person name="Frangeul L."/>
            <person name="Aigle M."/>
            <person name="Anthouard V."/>
            <person name="Babour A."/>
            <person name="Barbe V."/>
            <person name="Barnay S."/>
            <person name="Blanchin S."/>
            <person name="Beckerich J.-M."/>
            <person name="Beyne E."/>
            <person name="Bleykasten C."/>
            <person name="Boisrame A."/>
            <person name="Boyer J."/>
            <person name="Cattolico L."/>
            <person name="Confanioleri F."/>
            <person name="de Daruvar A."/>
            <person name="Despons L."/>
            <person name="Fabre E."/>
            <person name="Fairhead C."/>
            <person name="Ferry-Dumazet H."/>
            <person name="Groppi A."/>
            <person name="Hantraye F."/>
            <person name="Hennequin C."/>
            <person name="Jauniaux N."/>
            <person name="Joyet P."/>
            <person name="Kachouri R."/>
            <person name="Kerrest A."/>
            <person name="Koszul R."/>
            <person name="Lemaire M."/>
            <person name="Lesur I."/>
            <person name="Ma L."/>
            <person name="Muller H."/>
            <person name="Nicaud J.-M."/>
            <person name="Nikolski M."/>
            <person name="Oztas S."/>
            <person name="Ozier-Kalogeropoulos O."/>
            <person name="Pellenz S."/>
            <person name="Potier S."/>
            <person name="Richard G.-F."/>
            <person name="Straub M.-L."/>
            <person name="Suleau A."/>
            <person name="Swennen D."/>
            <person name="Tekaia F."/>
            <person name="Wesolowski-Louvel M."/>
            <person name="Westhof E."/>
            <person name="Wirth B."/>
            <person name="Zeniou-Meyer M."/>
            <person name="Zivanovic Y."/>
            <person name="Bolotin-Fukuhara M."/>
            <person name="Thierry A."/>
            <person name="Bouchier C."/>
            <person name="Caudron B."/>
            <person name="Scarpelli C."/>
            <person name="Gaillardin C."/>
            <person name="Weissenbach J."/>
            <person name="Wincker P."/>
            <person name="Souciet J.-L."/>
        </authorList>
    </citation>
    <scope>NUCLEOTIDE SEQUENCE [LARGE SCALE GENOMIC DNA]</scope>
    <source>
        <strain>ATCC 36239 / CBS 767 / BCRC 21394 / JCM 1990 / NBRC 0083 / IGC 2968</strain>
    </source>
</reference>
<name>ALG3_DEBHA</name>
<keyword id="KW-0256">Endoplasmic reticulum</keyword>
<keyword id="KW-0328">Glycosyltransferase</keyword>
<keyword id="KW-0472">Membrane</keyword>
<keyword id="KW-1185">Reference proteome</keyword>
<keyword id="KW-0808">Transferase</keyword>
<keyword id="KW-0812">Transmembrane</keyword>
<keyword id="KW-1133">Transmembrane helix</keyword>
<dbReference type="EC" id="2.4.1.258" evidence="1"/>
<dbReference type="EMBL" id="CR382133">
    <property type="protein sequence ID" value="CAG84537.1"/>
    <property type="molecule type" value="Genomic_DNA"/>
</dbReference>
<dbReference type="RefSeq" id="XP_456581.1">
    <property type="nucleotide sequence ID" value="XM_456581.1"/>
</dbReference>
<dbReference type="FunCoup" id="Q6BYY8">
    <property type="interactions" value="678"/>
</dbReference>
<dbReference type="STRING" id="284592.Q6BYY8"/>
<dbReference type="CAZy" id="GT58">
    <property type="family name" value="Glycosyltransferase Family 58"/>
</dbReference>
<dbReference type="GeneID" id="2899876"/>
<dbReference type="KEGG" id="dha:DEHA2A05940g"/>
<dbReference type="VEuPathDB" id="FungiDB:DEHA2A05940g"/>
<dbReference type="eggNOG" id="KOG2762">
    <property type="taxonomic scope" value="Eukaryota"/>
</dbReference>
<dbReference type="HOGENOM" id="CLU_035382_3_0_1"/>
<dbReference type="InParanoid" id="Q6BYY8"/>
<dbReference type="OMA" id="DWETYMI"/>
<dbReference type="OrthoDB" id="20028at2759"/>
<dbReference type="UniPathway" id="UPA00378"/>
<dbReference type="Proteomes" id="UP000000599">
    <property type="component" value="Chromosome A"/>
</dbReference>
<dbReference type="GO" id="GO:0005789">
    <property type="term" value="C:endoplasmic reticulum membrane"/>
    <property type="evidence" value="ECO:0007669"/>
    <property type="project" value="UniProtKB-SubCell"/>
</dbReference>
<dbReference type="GO" id="GO:0052925">
    <property type="term" value="F:dol-P-Man:Man(5)GlcNAc(2)-PP-Dol alpha-1,3-mannosyltransferase activity"/>
    <property type="evidence" value="ECO:0007669"/>
    <property type="project" value="UniProtKB-EC"/>
</dbReference>
<dbReference type="GO" id="GO:0006488">
    <property type="term" value="P:dolichol-linked oligosaccharide biosynthetic process"/>
    <property type="evidence" value="ECO:0007669"/>
    <property type="project" value="EnsemblFungi"/>
</dbReference>
<dbReference type="InterPro" id="IPR007873">
    <property type="entry name" value="Glycosyltransferase_ALG3"/>
</dbReference>
<dbReference type="PANTHER" id="PTHR12646:SF0">
    <property type="entry name" value="DOL-P-MAN:MAN(5)GLCNAC(2)-PP-DOL ALPHA-1,3-MANNOSYLTRANSFERASE"/>
    <property type="match status" value="1"/>
</dbReference>
<dbReference type="PANTHER" id="PTHR12646">
    <property type="entry name" value="NOT56 - RELATED"/>
    <property type="match status" value="1"/>
</dbReference>
<dbReference type="Pfam" id="PF05208">
    <property type="entry name" value="ALG3"/>
    <property type="match status" value="1"/>
</dbReference>
<accession>Q6BYY8</accession>
<protein>
    <recommendedName>
        <fullName evidence="1">Dol-P-Man:Man(5)GlcNAc(2)-PP-Dol alpha-1,3-mannosyltransferase</fullName>
        <ecNumber evidence="1">2.4.1.258</ecNumber>
    </recommendedName>
    <alternativeName>
        <fullName>Asparagine-linked glycosylation protein 6</fullName>
    </alternativeName>
    <alternativeName>
        <fullName>Dol-P-Man-dependent alpha(1-3)-mannosyltransferase</fullName>
    </alternativeName>
    <alternativeName>
        <fullName>Dolichyl-P-Man:Man(5)GlcNAc(2)-PP-dolichyl mannosyltransferase</fullName>
    </alternativeName>
</protein>